<keyword id="KW-0963">Cytoplasm</keyword>
<keyword id="KW-0489">Methyltransferase</keyword>
<keyword id="KW-1185">Reference proteome</keyword>
<keyword id="KW-0698">rRNA processing</keyword>
<keyword id="KW-0949">S-adenosyl-L-methionine</keyword>
<keyword id="KW-0808">Transferase</keyword>
<organism>
    <name type="scientific">Escherichia coli O1:K1 / APEC</name>
    <dbReference type="NCBI Taxonomy" id="405955"/>
    <lineage>
        <taxon>Bacteria</taxon>
        <taxon>Pseudomonadati</taxon>
        <taxon>Pseudomonadota</taxon>
        <taxon>Gammaproteobacteria</taxon>
        <taxon>Enterobacterales</taxon>
        <taxon>Enterobacteriaceae</taxon>
        <taxon>Escherichia</taxon>
    </lineage>
</organism>
<feature type="chain" id="PRO_0000369708" description="Ribosomal RNA small subunit methyltransferase C">
    <location>
        <begin position="1"/>
        <end position="343"/>
    </location>
</feature>
<sequence>MSAFTPASEVLLRHSDDFEQSRILFAGDLQDDLPARLDTAASRAHTQQFHHWQVLSRQMGDNARFSLVATANDVADCDTLIYYWPKNKPEAQFQLMNLLSLLPVGTDIFVVGENRSGVRIAEQMLADYAPLNKVDSARRCGLYFGRLEKQPVFDANKFWGEYSVDGLTVKTLPGVFSRDGLDVGSQLLLSTLTPHTKGKVLDVGCGAGVLSVAFARHSPKIRLTLCDVSAPAVEASRATLATNGVEGEVFASNVFSEVKGRFDMIISNPPFHDGMQTSLDAAQTLIRGAVRHLNSGGELRIVANAFLPYPDVLDETFGFHEVIAQTGRFKVYRAIMTRQAKKG</sequence>
<proteinExistence type="inferred from homology"/>
<name>RSMC_ECOK1</name>
<accession>A1AJP2</accession>
<protein>
    <recommendedName>
        <fullName evidence="1">Ribosomal RNA small subunit methyltransferase C</fullName>
        <ecNumber evidence="1">2.1.1.172</ecNumber>
    </recommendedName>
    <alternativeName>
        <fullName evidence="1">16S rRNA m2G1207 methyltransferase</fullName>
    </alternativeName>
    <alternativeName>
        <fullName evidence="1">rRNA (guanine-N(2)-)-methyltransferase RsmC</fullName>
    </alternativeName>
</protein>
<reference key="1">
    <citation type="journal article" date="2007" name="J. Bacteriol.">
        <title>The genome sequence of avian pathogenic Escherichia coli strain O1:K1:H7 shares strong similarities with human extraintestinal pathogenic E. coli genomes.</title>
        <authorList>
            <person name="Johnson T.J."/>
            <person name="Kariyawasam S."/>
            <person name="Wannemuehler Y."/>
            <person name="Mangiamele P."/>
            <person name="Johnson S.J."/>
            <person name="Doetkott C."/>
            <person name="Skyberg J.A."/>
            <person name="Lynne A.M."/>
            <person name="Johnson J.R."/>
            <person name="Nolan L.K."/>
        </authorList>
    </citation>
    <scope>NUCLEOTIDE SEQUENCE [LARGE SCALE GENOMIC DNA]</scope>
</reference>
<dbReference type="EC" id="2.1.1.172" evidence="1"/>
<dbReference type="EMBL" id="CP000468">
    <property type="protein sequence ID" value="ABJ03882.1"/>
    <property type="molecule type" value="Genomic_DNA"/>
</dbReference>
<dbReference type="RefSeq" id="WP_001272336.1">
    <property type="nucleotide sequence ID" value="NZ_CADILS010000106.1"/>
</dbReference>
<dbReference type="SMR" id="A1AJP2"/>
<dbReference type="KEGG" id="ecv:APECO1_2055"/>
<dbReference type="HOGENOM" id="CLU_049581_0_1_6"/>
<dbReference type="Proteomes" id="UP000008216">
    <property type="component" value="Chromosome"/>
</dbReference>
<dbReference type="GO" id="GO:0005737">
    <property type="term" value="C:cytoplasm"/>
    <property type="evidence" value="ECO:0007669"/>
    <property type="project" value="UniProtKB-SubCell"/>
</dbReference>
<dbReference type="GO" id="GO:0052914">
    <property type="term" value="F:16S rRNA (guanine(1207)-N(2))-methyltransferase activity"/>
    <property type="evidence" value="ECO:0007669"/>
    <property type="project" value="UniProtKB-EC"/>
</dbReference>
<dbReference type="GO" id="GO:0003676">
    <property type="term" value="F:nucleic acid binding"/>
    <property type="evidence" value="ECO:0007669"/>
    <property type="project" value="InterPro"/>
</dbReference>
<dbReference type="CDD" id="cd02440">
    <property type="entry name" value="AdoMet_MTases"/>
    <property type="match status" value="1"/>
</dbReference>
<dbReference type="FunFam" id="3.40.50.150:FF:000058">
    <property type="entry name" value="Ribosomal RNA small subunit methyltransferase C"/>
    <property type="match status" value="1"/>
</dbReference>
<dbReference type="FunFam" id="3.40.50.150:FF:000063">
    <property type="entry name" value="Ribosomal RNA small subunit methyltransferase C"/>
    <property type="match status" value="1"/>
</dbReference>
<dbReference type="Gene3D" id="3.40.50.150">
    <property type="entry name" value="Vaccinia Virus protein VP39"/>
    <property type="match status" value="2"/>
</dbReference>
<dbReference type="HAMAP" id="MF_01862">
    <property type="entry name" value="16SrRNA_methyltr_C"/>
    <property type="match status" value="1"/>
</dbReference>
<dbReference type="InterPro" id="IPR002052">
    <property type="entry name" value="DNA_methylase_N6_adenine_CS"/>
</dbReference>
<dbReference type="InterPro" id="IPR013675">
    <property type="entry name" value="Mtase_sm_N"/>
</dbReference>
<dbReference type="InterPro" id="IPR023543">
    <property type="entry name" value="rRNA_ssu_MeTfrase_C"/>
</dbReference>
<dbReference type="InterPro" id="IPR046977">
    <property type="entry name" value="RsmC/RlmG"/>
</dbReference>
<dbReference type="InterPro" id="IPR029063">
    <property type="entry name" value="SAM-dependent_MTases_sf"/>
</dbReference>
<dbReference type="InterPro" id="IPR007848">
    <property type="entry name" value="Small_mtfrase_dom"/>
</dbReference>
<dbReference type="NCBIfam" id="NF007023">
    <property type="entry name" value="PRK09489.1"/>
    <property type="match status" value="1"/>
</dbReference>
<dbReference type="PANTHER" id="PTHR47816">
    <property type="entry name" value="RIBOSOMAL RNA SMALL SUBUNIT METHYLTRANSFERASE C"/>
    <property type="match status" value="1"/>
</dbReference>
<dbReference type="PANTHER" id="PTHR47816:SF4">
    <property type="entry name" value="RIBOSOMAL RNA SMALL SUBUNIT METHYLTRANSFERASE C"/>
    <property type="match status" value="1"/>
</dbReference>
<dbReference type="Pfam" id="PF05175">
    <property type="entry name" value="MTS"/>
    <property type="match status" value="1"/>
</dbReference>
<dbReference type="Pfam" id="PF08468">
    <property type="entry name" value="MTS_N"/>
    <property type="match status" value="1"/>
</dbReference>
<dbReference type="SUPFAM" id="SSF53335">
    <property type="entry name" value="S-adenosyl-L-methionine-dependent methyltransferases"/>
    <property type="match status" value="1"/>
</dbReference>
<comment type="function">
    <text evidence="1">Specifically methylates the guanine in position 1207 of 16S rRNA in the 30S particle.</text>
</comment>
<comment type="catalytic activity">
    <reaction evidence="1">
        <text>guanosine(1207) in 16S rRNA + S-adenosyl-L-methionine = N(2)-methylguanosine(1207) in 16S rRNA + S-adenosyl-L-homocysteine + H(+)</text>
        <dbReference type="Rhea" id="RHEA:42736"/>
        <dbReference type="Rhea" id="RHEA-COMP:10213"/>
        <dbReference type="Rhea" id="RHEA-COMP:10214"/>
        <dbReference type="ChEBI" id="CHEBI:15378"/>
        <dbReference type="ChEBI" id="CHEBI:57856"/>
        <dbReference type="ChEBI" id="CHEBI:59789"/>
        <dbReference type="ChEBI" id="CHEBI:74269"/>
        <dbReference type="ChEBI" id="CHEBI:74481"/>
        <dbReference type="EC" id="2.1.1.172"/>
    </reaction>
</comment>
<comment type="subunit">
    <text evidence="1">Monomer.</text>
</comment>
<comment type="subcellular location">
    <subcellularLocation>
        <location evidence="1">Cytoplasm</location>
    </subcellularLocation>
</comment>
<comment type="similarity">
    <text evidence="1">Belongs to the methyltransferase superfamily. RsmC family.</text>
</comment>
<gene>
    <name evidence="1" type="primary">rsmC</name>
    <name type="ordered locus">Ecok1_43880</name>
    <name type="ORF">APECO1_2055</name>
</gene>
<evidence type="ECO:0000255" key="1">
    <source>
        <dbReference type="HAMAP-Rule" id="MF_01862"/>
    </source>
</evidence>